<keyword id="KW-0030">Aminoacyl-tRNA synthetase</keyword>
<keyword id="KW-0067">ATP-binding</keyword>
<keyword id="KW-0963">Cytoplasm</keyword>
<keyword id="KW-0436">Ligase</keyword>
<keyword id="KW-0547">Nucleotide-binding</keyword>
<keyword id="KW-0648">Protein biosynthesis</keyword>
<keyword id="KW-1185">Reference proteome</keyword>
<gene>
    <name evidence="1" type="primary">serS</name>
    <name type="ordered locus">AZOSEA39910</name>
    <name type="ORF">ebA7034</name>
</gene>
<reference key="1">
    <citation type="journal article" date="2005" name="Arch. Microbiol.">
        <title>The genome sequence of an anaerobic aromatic-degrading denitrifying bacterium, strain EbN1.</title>
        <authorList>
            <person name="Rabus R."/>
            <person name="Kube M."/>
            <person name="Heider J."/>
            <person name="Beck A."/>
            <person name="Heitmann K."/>
            <person name="Widdel F."/>
            <person name="Reinhardt R."/>
        </authorList>
    </citation>
    <scope>NUCLEOTIDE SEQUENCE [LARGE SCALE GENOMIC DNA]</scope>
    <source>
        <strain>DSM 19018 / LMG 30748 / EbN1</strain>
    </source>
</reference>
<comment type="function">
    <text evidence="1">Catalyzes the attachment of serine to tRNA(Ser). Is also able to aminoacylate tRNA(Sec) with serine, to form the misacylated tRNA L-seryl-tRNA(Sec), which will be further converted into selenocysteinyl-tRNA(Sec).</text>
</comment>
<comment type="catalytic activity">
    <reaction evidence="1">
        <text>tRNA(Ser) + L-serine + ATP = L-seryl-tRNA(Ser) + AMP + diphosphate + H(+)</text>
        <dbReference type="Rhea" id="RHEA:12292"/>
        <dbReference type="Rhea" id="RHEA-COMP:9669"/>
        <dbReference type="Rhea" id="RHEA-COMP:9703"/>
        <dbReference type="ChEBI" id="CHEBI:15378"/>
        <dbReference type="ChEBI" id="CHEBI:30616"/>
        <dbReference type="ChEBI" id="CHEBI:33019"/>
        <dbReference type="ChEBI" id="CHEBI:33384"/>
        <dbReference type="ChEBI" id="CHEBI:78442"/>
        <dbReference type="ChEBI" id="CHEBI:78533"/>
        <dbReference type="ChEBI" id="CHEBI:456215"/>
        <dbReference type="EC" id="6.1.1.11"/>
    </reaction>
</comment>
<comment type="catalytic activity">
    <reaction evidence="1">
        <text>tRNA(Sec) + L-serine + ATP = L-seryl-tRNA(Sec) + AMP + diphosphate + H(+)</text>
        <dbReference type="Rhea" id="RHEA:42580"/>
        <dbReference type="Rhea" id="RHEA-COMP:9742"/>
        <dbReference type="Rhea" id="RHEA-COMP:10128"/>
        <dbReference type="ChEBI" id="CHEBI:15378"/>
        <dbReference type="ChEBI" id="CHEBI:30616"/>
        <dbReference type="ChEBI" id="CHEBI:33019"/>
        <dbReference type="ChEBI" id="CHEBI:33384"/>
        <dbReference type="ChEBI" id="CHEBI:78442"/>
        <dbReference type="ChEBI" id="CHEBI:78533"/>
        <dbReference type="ChEBI" id="CHEBI:456215"/>
        <dbReference type="EC" id="6.1.1.11"/>
    </reaction>
</comment>
<comment type="pathway">
    <text evidence="1">Aminoacyl-tRNA biosynthesis; selenocysteinyl-tRNA(Sec) biosynthesis; L-seryl-tRNA(Sec) from L-serine and tRNA(Sec): step 1/1.</text>
</comment>
<comment type="subunit">
    <text evidence="1">Homodimer. The tRNA molecule binds across the dimer.</text>
</comment>
<comment type="subcellular location">
    <subcellularLocation>
        <location evidence="1">Cytoplasm</location>
    </subcellularLocation>
</comment>
<comment type="domain">
    <text evidence="1">Consists of two distinct domains, a catalytic core and a N-terminal extension that is involved in tRNA binding.</text>
</comment>
<comment type="similarity">
    <text evidence="1">Belongs to the class-II aminoacyl-tRNA synthetase family. Type-1 seryl-tRNA synthetase subfamily.</text>
</comment>
<feature type="chain" id="PRO_0000121996" description="Serine--tRNA ligase">
    <location>
        <begin position="1"/>
        <end position="427"/>
    </location>
</feature>
<feature type="binding site" evidence="1">
    <location>
        <begin position="232"/>
        <end position="234"/>
    </location>
    <ligand>
        <name>L-serine</name>
        <dbReference type="ChEBI" id="CHEBI:33384"/>
    </ligand>
</feature>
<feature type="binding site" evidence="1">
    <location>
        <begin position="263"/>
        <end position="265"/>
    </location>
    <ligand>
        <name>ATP</name>
        <dbReference type="ChEBI" id="CHEBI:30616"/>
    </ligand>
</feature>
<feature type="binding site" evidence="1">
    <location>
        <position position="286"/>
    </location>
    <ligand>
        <name>L-serine</name>
        <dbReference type="ChEBI" id="CHEBI:33384"/>
    </ligand>
</feature>
<feature type="binding site" evidence="1">
    <location>
        <begin position="350"/>
        <end position="353"/>
    </location>
    <ligand>
        <name>ATP</name>
        <dbReference type="ChEBI" id="CHEBI:30616"/>
    </ligand>
</feature>
<feature type="binding site" evidence="1">
    <location>
        <position position="385"/>
    </location>
    <ligand>
        <name>L-serine</name>
        <dbReference type="ChEBI" id="CHEBI:33384"/>
    </ligand>
</feature>
<protein>
    <recommendedName>
        <fullName evidence="1">Serine--tRNA ligase</fullName>
        <ecNumber evidence="1">6.1.1.11</ecNumber>
    </recommendedName>
    <alternativeName>
        <fullName evidence="1">Seryl-tRNA synthetase</fullName>
        <shortName evidence="1">SerRS</shortName>
    </alternativeName>
    <alternativeName>
        <fullName evidence="1">Seryl-tRNA(Ser/Sec) synthetase</fullName>
    </alternativeName>
</protein>
<accession>Q5NXU8</accession>
<sequence>MLDIQLLRTQIDAVAAALAARGANFDAAAFQSMENERKTLQTRTQDLQARRNTLSKQIGVLKSRGEDASAAMAEVGGIGDELKANEQALATLLERINAFVAGLPNLPHDSVPPGRDESANVEIARWGTPREFDFEVSDHVDIGSGLGGLDFETAAKISGSRFALMRDGLARLHRALAQFMLDVHTREHGYTEVHVPYLVNPDSMFGTGQLPKFEAELFSVMKDDGRFYLIPTAEVPITNIVRNELLAHDVLPLKFVGHTPCFRSEAGSYGRDTRGMIRQHQFDKVELVRIEHPDASWAALEELTGHAEAILRKLELPYRKVVLCTGDMGFSAAKTYDLEVWLPAQKTYREISSCSCTGAFQARRMQARFRNTQGKNELVHTLNGSGLAVGRTLVAVLENYQQADGSVVVPKVLVPWMGGIEVLEPRG</sequence>
<evidence type="ECO:0000255" key="1">
    <source>
        <dbReference type="HAMAP-Rule" id="MF_00176"/>
    </source>
</evidence>
<organism>
    <name type="scientific">Aromatoleum aromaticum (strain DSM 19018 / LMG 30748 / EbN1)</name>
    <name type="common">Azoarcus sp. (strain EbN1)</name>
    <dbReference type="NCBI Taxonomy" id="76114"/>
    <lineage>
        <taxon>Bacteria</taxon>
        <taxon>Pseudomonadati</taxon>
        <taxon>Pseudomonadota</taxon>
        <taxon>Betaproteobacteria</taxon>
        <taxon>Rhodocyclales</taxon>
        <taxon>Rhodocyclaceae</taxon>
        <taxon>Aromatoleum</taxon>
    </lineage>
</organism>
<proteinExistence type="inferred from homology"/>
<dbReference type="EC" id="6.1.1.11" evidence="1"/>
<dbReference type="EMBL" id="CR555306">
    <property type="protein sequence ID" value="CAI10116.1"/>
    <property type="molecule type" value="Genomic_DNA"/>
</dbReference>
<dbReference type="RefSeq" id="WP_011239761.1">
    <property type="nucleotide sequence ID" value="NC_006513.1"/>
</dbReference>
<dbReference type="SMR" id="Q5NXU8"/>
<dbReference type="STRING" id="76114.ebA7034"/>
<dbReference type="KEGG" id="eba:ebA7034"/>
<dbReference type="eggNOG" id="COG0172">
    <property type="taxonomic scope" value="Bacteria"/>
</dbReference>
<dbReference type="HOGENOM" id="CLU_023797_1_1_4"/>
<dbReference type="OrthoDB" id="9804647at2"/>
<dbReference type="UniPathway" id="UPA00906">
    <property type="reaction ID" value="UER00895"/>
</dbReference>
<dbReference type="Proteomes" id="UP000006552">
    <property type="component" value="Chromosome"/>
</dbReference>
<dbReference type="GO" id="GO:0005737">
    <property type="term" value="C:cytoplasm"/>
    <property type="evidence" value="ECO:0007669"/>
    <property type="project" value="UniProtKB-SubCell"/>
</dbReference>
<dbReference type="GO" id="GO:0005524">
    <property type="term" value="F:ATP binding"/>
    <property type="evidence" value="ECO:0007669"/>
    <property type="project" value="UniProtKB-UniRule"/>
</dbReference>
<dbReference type="GO" id="GO:0004828">
    <property type="term" value="F:serine-tRNA ligase activity"/>
    <property type="evidence" value="ECO:0007669"/>
    <property type="project" value="UniProtKB-UniRule"/>
</dbReference>
<dbReference type="GO" id="GO:0016260">
    <property type="term" value="P:selenocysteine biosynthetic process"/>
    <property type="evidence" value="ECO:0007669"/>
    <property type="project" value="UniProtKB-UniRule"/>
</dbReference>
<dbReference type="GO" id="GO:0006434">
    <property type="term" value="P:seryl-tRNA aminoacylation"/>
    <property type="evidence" value="ECO:0007669"/>
    <property type="project" value="UniProtKB-UniRule"/>
</dbReference>
<dbReference type="CDD" id="cd00770">
    <property type="entry name" value="SerRS_core"/>
    <property type="match status" value="1"/>
</dbReference>
<dbReference type="Gene3D" id="3.30.930.10">
    <property type="entry name" value="Bira Bifunctional Protein, Domain 2"/>
    <property type="match status" value="1"/>
</dbReference>
<dbReference type="Gene3D" id="1.10.287.40">
    <property type="entry name" value="Serine-tRNA synthetase, tRNA binding domain"/>
    <property type="match status" value="1"/>
</dbReference>
<dbReference type="HAMAP" id="MF_00176">
    <property type="entry name" value="Ser_tRNA_synth_type1"/>
    <property type="match status" value="1"/>
</dbReference>
<dbReference type="InterPro" id="IPR002314">
    <property type="entry name" value="aa-tRNA-synt_IIb"/>
</dbReference>
<dbReference type="InterPro" id="IPR006195">
    <property type="entry name" value="aa-tRNA-synth_II"/>
</dbReference>
<dbReference type="InterPro" id="IPR045864">
    <property type="entry name" value="aa-tRNA-synth_II/BPL/LPL"/>
</dbReference>
<dbReference type="InterPro" id="IPR002317">
    <property type="entry name" value="Ser-tRNA-ligase_type_1"/>
</dbReference>
<dbReference type="InterPro" id="IPR015866">
    <property type="entry name" value="Ser-tRNA-synth_1_N"/>
</dbReference>
<dbReference type="InterPro" id="IPR042103">
    <property type="entry name" value="SerRS_1_N_sf"/>
</dbReference>
<dbReference type="InterPro" id="IPR033729">
    <property type="entry name" value="SerRS_core"/>
</dbReference>
<dbReference type="InterPro" id="IPR010978">
    <property type="entry name" value="tRNA-bd_arm"/>
</dbReference>
<dbReference type="NCBIfam" id="TIGR00414">
    <property type="entry name" value="serS"/>
    <property type="match status" value="1"/>
</dbReference>
<dbReference type="PANTHER" id="PTHR43697:SF1">
    <property type="entry name" value="SERINE--TRNA LIGASE"/>
    <property type="match status" value="1"/>
</dbReference>
<dbReference type="PANTHER" id="PTHR43697">
    <property type="entry name" value="SERYL-TRNA SYNTHETASE"/>
    <property type="match status" value="1"/>
</dbReference>
<dbReference type="Pfam" id="PF02403">
    <property type="entry name" value="Seryl_tRNA_N"/>
    <property type="match status" value="1"/>
</dbReference>
<dbReference type="Pfam" id="PF00587">
    <property type="entry name" value="tRNA-synt_2b"/>
    <property type="match status" value="1"/>
</dbReference>
<dbReference type="PIRSF" id="PIRSF001529">
    <property type="entry name" value="Ser-tRNA-synth_IIa"/>
    <property type="match status" value="1"/>
</dbReference>
<dbReference type="PRINTS" id="PR00981">
    <property type="entry name" value="TRNASYNTHSER"/>
</dbReference>
<dbReference type="SUPFAM" id="SSF55681">
    <property type="entry name" value="Class II aaRS and biotin synthetases"/>
    <property type="match status" value="1"/>
</dbReference>
<dbReference type="SUPFAM" id="SSF46589">
    <property type="entry name" value="tRNA-binding arm"/>
    <property type="match status" value="1"/>
</dbReference>
<dbReference type="PROSITE" id="PS50862">
    <property type="entry name" value="AA_TRNA_LIGASE_II"/>
    <property type="match status" value="1"/>
</dbReference>
<name>SYS_AROAE</name>